<dbReference type="EC" id="2.3.1.35" evidence="1"/>
<dbReference type="EC" id="2.3.1.1" evidence="1"/>
<dbReference type="EMBL" id="CP000095">
    <property type="protein sequence ID" value="AAZ58871.1"/>
    <property type="molecule type" value="Genomic_DNA"/>
</dbReference>
<dbReference type="RefSeq" id="WP_011294015.1">
    <property type="nucleotide sequence ID" value="NC_007335.2"/>
</dbReference>
<dbReference type="SMR" id="Q46I07"/>
<dbReference type="STRING" id="59920.PMN2A_1383"/>
<dbReference type="MEROPS" id="T05.002"/>
<dbReference type="KEGG" id="pmn:PMN2A_1383"/>
<dbReference type="HOGENOM" id="CLU_027172_1_0_3"/>
<dbReference type="OrthoDB" id="9804242at2"/>
<dbReference type="PhylomeDB" id="Q46I07"/>
<dbReference type="UniPathway" id="UPA00068">
    <property type="reaction ID" value="UER00106"/>
</dbReference>
<dbReference type="UniPathway" id="UPA00068">
    <property type="reaction ID" value="UER00111"/>
</dbReference>
<dbReference type="Proteomes" id="UP000002535">
    <property type="component" value="Chromosome"/>
</dbReference>
<dbReference type="GO" id="GO:0005737">
    <property type="term" value="C:cytoplasm"/>
    <property type="evidence" value="ECO:0007669"/>
    <property type="project" value="UniProtKB-SubCell"/>
</dbReference>
<dbReference type="GO" id="GO:0004358">
    <property type="term" value="F:glutamate N-acetyltransferase activity"/>
    <property type="evidence" value="ECO:0007669"/>
    <property type="project" value="UniProtKB-UniRule"/>
</dbReference>
<dbReference type="GO" id="GO:0004042">
    <property type="term" value="F:L-glutamate N-acetyltransferase activity"/>
    <property type="evidence" value="ECO:0007669"/>
    <property type="project" value="UniProtKB-UniRule"/>
</dbReference>
<dbReference type="GO" id="GO:0006526">
    <property type="term" value="P:L-arginine biosynthetic process"/>
    <property type="evidence" value="ECO:0007669"/>
    <property type="project" value="UniProtKB-UniRule"/>
</dbReference>
<dbReference type="GO" id="GO:0006592">
    <property type="term" value="P:ornithine biosynthetic process"/>
    <property type="evidence" value="ECO:0007669"/>
    <property type="project" value="TreeGrafter"/>
</dbReference>
<dbReference type="CDD" id="cd02152">
    <property type="entry name" value="OAT"/>
    <property type="match status" value="1"/>
</dbReference>
<dbReference type="FunFam" id="3.10.20.340:FF:000001">
    <property type="entry name" value="Arginine biosynthesis bifunctional protein ArgJ, chloroplastic"/>
    <property type="match status" value="1"/>
</dbReference>
<dbReference type="FunFam" id="3.60.70.12:FF:000001">
    <property type="entry name" value="Arginine biosynthesis bifunctional protein ArgJ, chloroplastic"/>
    <property type="match status" value="1"/>
</dbReference>
<dbReference type="Gene3D" id="3.10.20.340">
    <property type="entry name" value="ArgJ beta chain, C-terminal domain"/>
    <property type="match status" value="1"/>
</dbReference>
<dbReference type="Gene3D" id="3.60.70.12">
    <property type="entry name" value="L-amino peptidase D-ALA esterase/amidase"/>
    <property type="match status" value="1"/>
</dbReference>
<dbReference type="HAMAP" id="MF_01106">
    <property type="entry name" value="ArgJ"/>
    <property type="match status" value="1"/>
</dbReference>
<dbReference type="InterPro" id="IPR002813">
    <property type="entry name" value="Arg_biosynth_ArgJ"/>
</dbReference>
<dbReference type="InterPro" id="IPR016117">
    <property type="entry name" value="ArgJ-like_dom_sf"/>
</dbReference>
<dbReference type="InterPro" id="IPR042195">
    <property type="entry name" value="ArgJ_beta_C"/>
</dbReference>
<dbReference type="NCBIfam" id="TIGR00120">
    <property type="entry name" value="ArgJ"/>
    <property type="match status" value="1"/>
</dbReference>
<dbReference type="NCBIfam" id="NF003802">
    <property type="entry name" value="PRK05388.1"/>
    <property type="match status" value="1"/>
</dbReference>
<dbReference type="PANTHER" id="PTHR23100">
    <property type="entry name" value="ARGININE BIOSYNTHESIS BIFUNCTIONAL PROTEIN ARGJ"/>
    <property type="match status" value="1"/>
</dbReference>
<dbReference type="PANTHER" id="PTHR23100:SF0">
    <property type="entry name" value="ARGININE BIOSYNTHESIS BIFUNCTIONAL PROTEIN ARGJ, MITOCHONDRIAL"/>
    <property type="match status" value="1"/>
</dbReference>
<dbReference type="Pfam" id="PF01960">
    <property type="entry name" value="ArgJ"/>
    <property type="match status" value="1"/>
</dbReference>
<dbReference type="SUPFAM" id="SSF56266">
    <property type="entry name" value="DmpA/ArgJ-like"/>
    <property type="match status" value="1"/>
</dbReference>
<organism>
    <name type="scientific">Prochlorococcus marinus (strain NATL2A)</name>
    <dbReference type="NCBI Taxonomy" id="59920"/>
    <lineage>
        <taxon>Bacteria</taxon>
        <taxon>Bacillati</taxon>
        <taxon>Cyanobacteriota</taxon>
        <taxon>Cyanophyceae</taxon>
        <taxon>Synechococcales</taxon>
        <taxon>Prochlorococcaceae</taxon>
        <taxon>Prochlorococcus</taxon>
    </lineage>
</organism>
<evidence type="ECO:0000255" key="1">
    <source>
        <dbReference type="HAMAP-Rule" id="MF_01106"/>
    </source>
</evidence>
<protein>
    <recommendedName>
        <fullName evidence="1">Arginine biosynthesis bifunctional protein ArgJ</fullName>
    </recommendedName>
    <domain>
        <recommendedName>
            <fullName evidence="1">Glutamate N-acetyltransferase</fullName>
            <ecNumber evidence="1">2.3.1.35</ecNumber>
        </recommendedName>
        <alternativeName>
            <fullName evidence="1">Ornithine acetyltransferase</fullName>
            <shortName evidence="1">OATase</shortName>
        </alternativeName>
        <alternativeName>
            <fullName evidence="1">Ornithine transacetylase</fullName>
        </alternativeName>
    </domain>
    <domain>
        <recommendedName>
            <fullName evidence="1">Amino-acid acetyltransferase</fullName>
            <ecNumber evidence="1">2.3.1.1</ecNumber>
        </recommendedName>
        <alternativeName>
            <fullName evidence="1">N-acetylglutamate synthase</fullName>
            <shortName evidence="1">AGSase</shortName>
        </alternativeName>
    </domain>
    <component>
        <recommendedName>
            <fullName evidence="1">Arginine biosynthesis bifunctional protein ArgJ alpha chain</fullName>
        </recommendedName>
    </component>
    <component>
        <recommendedName>
            <fullName evidence="1">Arginine biosynthesis bifunctional protein ArgJ beta chain</fullName>
        </recommendedName>
    </component>
</protein>
<keyword id="KW-0012">Acyltransferase</keyword>
<keyword id="KW-0028">Amino-acid biosynthesis</keyword>
<keyword id="KW-0055">Arginine biosynthesis</keyword>
<keyword id="KW-0068">Autocatalytic cleavage</keyword>
<keyword id="KW-0963">Cytoplasm</keyword>
<keyword id="KW-0511">Multifunctional enzyme</keyword>
<keyword id="KW-1185">Reference proteome</keyword>
<keyword id="KW-0808">Transferase</keyword>
<accession>Q46I07</accession>
<gene>
    <name evidence="1" type="primary">argJ</name>
    <name type="ordered locus">PMN2A_1383</name>
</gene>
<sequence>MKNALLNLSLLTSSVWSPISGGITAPDGFLAAGISAGLKPSGKKDLALLYAPDGACCSGTFTQSVTRAYCVDLCIDRIKASEGKIRAVVINSGHANACTGSRGKIDSEMITHKLAQLLRLSSEEVLICSTGVIGEAIPVEKVNSHLDQLINSLDKEAYLDAANAILTTDLQVKQIAYQAVLGGRRISIGGMAKGSGMIHPSMATMLSYLTCDVGVDHVLWSDMIKRVAESSFNSITVDGDTSTNDTFLAFASGAELDPRYLSILEEGLHLTAQHLAKSIARDGEGANCLLEIKVEGASSDLDARAIARTIASSSLVKTAVHGSDPNWGRIIAALGRAGTSFNLNDVKLWIGPYEIFSNGTPLDFDRQIVSNFMKARLTGKYLIDDLISIRLRIGIGTGSATAWGCDLSDQYVRINADYTT</sequence>
<feature type="chain" id="PRO_0000227244" description="Arginine biosynthesis bifunctional protein ArgJ alpha chain" evidence="1">
    <location>
        <begin position="1"/>
        <end position="203"/>
    </location>
</feature>
<feature type="chain" id="PRO_0000227245" description="Arginine biosynthesis bifunctional protein ArgJ beta chain" evidence="1">
    <location>
        <begin position="204"/>
        <end position="420"/>
    </location>
</feature>
<feature type="active site" description="Nucleophile" evidence="1">
    <location>
        <position position="204"/>
    </location>
</feature>
<feature type="binding site" evidence="1">
    <location>
        <position position="167"/>
    </location>
    <ligand>
        <name>substrate</name>
    </ligand>
</feature>
<feature type="binding site" evidence="1">
    <location>
        <position position="193"/>
    </location>
    <ligand>
        <name>substrate</name>
    </ligand>
</feature>
<feature type="binding site" evidence="1">
    <location>
        <position position="204"/>
    </location>
    <ligand>
        <name>substrate</name>
    </ligand>
</feature>
<feature type="binding site" evidence="1">
    <location>
        <position position="284"/>
    </location>
    <ligand>
        <name>substrate</name>
    </ligand>
</feature>
<feature type="binding site" evidence="1">
    <location>
        <position position="415"/>
    </location>
    <ligand>
        <name>substrate</name>
    </ligand>
</feature>
<feature type="binding site" evidence="1">
    <location>
        <position position="420"/>
    </location>
    <ligand>
        <name>substrate</name>
    </ligand>
</feature>
<feature type="site" description="Involved in the stabilization of negative charge on the oxyanion by the formation of the oxyanion hole" evidence="1">
    <location>
        <position position="130"/>
    </location>
</feature>
<feature type="site" description="Involved in the stabilization of negative charge on the oxyanion by the formation of the oxyanion hole" evidence="1">
    <location>
        <position position="131"/>
    </location>
</feature>
<feature type="site" description="Cleavage; by autolysis" evidence="1">
    <location>
        <begin position="203"/>
        <end position="204"/>
    </location>
</feature>
<comment type="function">
    <text evidence="1">Catalyzes two activities which are involved in the cyclic version of arginine biosynthesis: the synthesis of N-acetylglutamate from glutamate and acetyl-CoA as the acetyl donor, and of ornithine by transacetylation between N(2)-acetylornithine and glutamate.</text>
</comment>
<comment type="catalytic activity">
    <reaction evidence="1">
        <text>N(2)-acetyl-L-ornithine + L-glutamate = N-acetyl-L-glutamate + L-ornithine</text>
        <dbReference type="Rhea" id="RHEA:15349"/>
        <dbReference type="ChEBI" id="CHEBI:29985"/>
        <dbReference type="ChEBI" id="CHEBI:44337"/>
        <dbReference type="ChEBI" id="CHEBI:46911"/>
        <dbReference type="ChEBI" id="CHEBI:57805"/>
        <dbReference type="EC" id="2.3.1.35"/>
    </reaction>
</comment>
<comment type="catalytic activity">
    <reaction evidence="1">
        <text>L-glutamate + acetyl-CoA = N-acetyl-L-glutamate + CoA + H(+)</text>
        <dbReference type="Rhea" id="RHEA:24292"/>
        <dbReference type="ChEBI" id="CHEBI:15378"/>
        <dbReference type="ChEBI" id="CHEBI:29985"/>
        <dbReference type="ChEBI" id="CHEBI:44337"/>
        <dbReference type="ChEBI" id="CHEBI:57287"/>
        <dbReference type="ChEBI" id="CHEBI:57288"/>
        <dbReference type="EC" id="2.3.1.1"/>
    </reaction>
</comment>
<comment type="pathway">
    <text evidence="1">Amino-acid biosynthesis; L-arginine biosynthesis; L-ornithine and N-acetyl-L-glutamate from L-glutamate and N(2)-acetyl-L-ornithine (cyclic): step 1/1.</text>
</comment>
<comment type="pathway">
    <text evidence="1">Amino-acid biosynthesis; L-arginine biosynthesis; N(2)-acetyl-L-ornithine from L-glutamate: step 1/4.</text>
</comment>
<comment type="subunit">
    <text evidence="1">Heterotetramer of two alpha and two beta chains.</text>
</comment>
<comment type="subcellular location">
    <subcellularLocation>
        <location evidence="1">Cytoplasm</location>
    </subcellularLocation>
</comment>
<comment type="similarity">
    <text evidence="1">Belongs to the ArgJ family.</text>
</comment>
<proteinExistence type="inferred from homology"/>
<reference key="1">
    <citation type="journal article" date="2007" name="PLoS Genet.">
        <title>Patterns and implications of gene gain and loss in the evolution of Prochlorococcus.</title>
        <authorList>
            <person name="Kettler G.C."/>
            <person name="Martiny A.C."/>
            <person name="Huang K."/>
            <person name="Zucker J."/>
            <person name="Coleman M.L."/>
            <person name="Rodrigue S."/>
            <person name="Chen F."/>
            <person name="Lapidus A."/>
            <person name="Ferriera S."/>
            <person name="Johnson J."/>
            <person name="Steglich C."/>
            <person name="Church G.M."/>
            <person name="Richardson P."/>
            <person name="Chisholm S.W."/>
        </authorList>
    </citation>
    <scope>NUCLEOTIDE SEQUENCE [LARGE SCALE GENOMIC DNA]</scope>
    <source>
        <strain>NATL2A</strain>
    </source>
</reference>
<name>ARGJ_PROMT</name>